<keyword id="KW-0963">Cytoplasm</keyword>
<keyword id="KW-1185">Reference proteome</keyword>
<keyword id="KW-0808">Transferase</keyword>
<gene>
    <name evidence="1" type="primary">glpE</name>
    <name type="ordered locus">Tola_0142</name>
</gene>
<sequence>MSQFTRISIQQAAALLQLPSVCLADIRDPSSFNAAHVTGAFHLTNDTLPQFTQQITKETPVLVMCYHGNSSQGVANYLTSIGYEKVYSIDGGFEGWRHVYPYTATV</sequence>
<accession>C4L7X3</accession>
<name>GLPE_TOLAT</name>
<dbReference type="EC" id="2.8.1.1" evidence="1"/>
<dbReference type="EMBL" id="CP001616">
    <property type="protein sequence ID" value="ACQ91772.1"/>
    <property type="molecule type" value="Genomic_DNA"/>
</dbReference>
<dbReference type="RefSeq" id="WP_012728371.1">
    <property type="nucleotide sequence ID" value="NC_012691.1"/>
</dbReference>
<dbReference type="SMR" id="C4L7X3"/>
<dbReference type="STRING" id="595494.Tola_0142"/>
<dbReference type="KEGG" id="tau:Tola_0142"/>
<dbReference type="eggNOG" id="COG0607">
    <property type="taxonomic scope" value="Bacteria"/>
</dbReference>
<dbReference type="HOGENOM" id="CLU_089574_14_0_6"/>
<dbReference type="OrthoDB" id="9811849at2"/>
<dbReference type="Proteomes" id="UP000009073">
    <property type="component" value="Chromosome"/>
</dbReference>
<dbReference type="GO" id="GO:0005737">
    <property type="term" value="C:cytoplasm"/>
    <property type="evidence" value="ECO:0007669"/>
    <property type="project" value="UniProtKB-SubCell"/>
</dbReference>
<dbReference type="GO" id="GO:0004792">
    <property type="term" value="F:thiosulfate-cyanide sulfurtransferase activity"/>
    <property type="evidence" value="ECO:0007669"/>
    <property type="project" value="UniProtKB-UniRule"/>
</dbReference>
<dbReference type="GO" id="GO:0006071">
    <property type="term" value="P:glycerol metabolic process"/>
    <property type="evidence" value="ECO:0007669"/>
    <property type="project" value="UniProtKB-UniRule"/>
</dbReference>
<dbReference type="CDD" id="cd01444">
    <property type="entry name" value="GlpE_ST"/>
    <property type="match status" value="1"/>
</dbReference>
<dbReference type="Gene3D" id="3.40.250.10">
    <property type="entry name" value="Rhodanese-like domain"/>
    <property type="match status" value="1"/>
</dbReference>
<dbReference type="HAMAP" id="MF_01009">
    <property type="entry name" value="Thiosulf_sulfurtr"/>
    <property type="match status" value="1"/>
</dbReference>
<dbReference type="InterPro" id="IPR050229">
    <property type="entry name" value="GlpE_sulfurtransferase"/>
</dbReference>
<dbReference type="InterPro" id="IPR001763">
    <property type="entry name" value="Rhodanese-like_dom"/>
</dbReference>
<dbReference type="InterPro" id="IPR036873">
    <property type="entry name" value="Rhodanese-like_dom_sf"/>
</dbReference>
<dbReference type="InterPro" id="IPR023695">
    <property type="entry name" value="Thiosulf_sulfurTrfase"/>
</dbReference>
<dbReference type="NCBIfam" id="NF001195">
    <property type="entry name" value="PRK00162.1"/>
    <property type="match status" value="1"/>
</dbReference>
<dbReference type="PANTHER" id="PTHR43031">
    <property type="entry name" value="FAD-DEPENDENT OXIDOREDUCTASE"/>
    <property type="match status" value="1"/>
</dbReference>
<dbReference type="PANTHER" id="PTHR43031:SF6">
    <property type="entry name" value="THIOSULFATE SULFURTRANSFERASE GLPE"/>
    <property type="match status" value="1"/>
</dbReference>
<dbReference type="Pfam" id="PF00581">
    <property type="entry name" value="Rhodanese"/>
    <property type="match status" value="1"/>
</dbReference>
<dbReference type="SMART" id="SM00450">
    <property type="entry name" value="RHOD"/>
    <property type="match status" value="1"/>
</dbReference>
<dbReference type="SUPFAM" id="SSF52821">
    <property type="entry name" value="Rhodanese/Cell cycle control phosphatase"/>
    <property type="match status" value="1"/>
</dbReference>
<dbReference type="PROSITE" id="PS50206">
    <property type="entry name" value="RHODANESE_3"/>
    <property type="match status" value="1"/>
</dbReference>
<organism>
    <name type="scientific">Tolumonas auensis (strain DSM 9187 / NBRC 110442 / TA 4)</name>
    <dbReference type="NCBI Taxonomy" id="595494"/>
    <lineage>
        <taxon>Bacteria</taxon>
        <taxon>Pseudomonadati</taxon>
        <taxon>Pseudomonadota</taxon>
        <taxon>Gammaproteobacteria</taxon>
        <taxon>Aeromonadales</taxon>
        <taxon>Aeromonadaceae</taxon>
        <taxon>Tolumonas</taxon>
    </lineage>
</organism>
<protein>
    <recommendedName>
        <fullName evidence="1">Thiosulfate sulfurtransferase GlpE</fullName>
        <ecNumber evidence="1">2.8.1.1</ecNumber>
    </recommendedName>
</protein>
<feature type="chain" id="PRO_1000213192" description="Thiosulfate sulfurtransferase GlpE">
    <location>
        <begin position="1"/>
        <end position="106"/>
    </location>
</feature>
<feature type="domain" description="Rhodanese" evidence="1">
    <location>
        <begin position="17"/>
        <end position="105"/>
    </location>
</feature>
<feature type="active site" description="Cysteine persulfide intermediate" evidence="1">
    <location>
        <position position="65"/>
    </location>
</feature>
<comment type="function">
    <text evidence="1">Transferase that catalyzes the transfer of sulfur from thiosulfate to thiophilic acceptors such as cyanide or dithiols. May function in a CysM-independent thiosulfate assimilation pathway by catalyzing the conversion of thiosulfate to sulfite, which can then be used for L-cysteine biosynthesis.</text>
</comment>
<comment type="catalytic activity">
    <reaction evidence="1">
        <text>thiosulfate + hydrogen cyanide = thiocyanate + sulfite + 2 H(+)</text>
        <dbReference type="Rhea" id="RHEA:16881"/>
        <dbReference type="ChEBI" id="CHEBI:15378"/>
        <dbReference type="ChEBI" id="CHEBI:17359"/>
        <dbReference type="ChEBI" id="CHEBI:18022"/>
        <dbReference type="ChEBI" id="CHEBI:18407"/>
        <dbReference type="ChEBI" id="CHEBI:33542"/>
        <dbReference type="EC" id="2.8.1.1"/>
    </reaction>
</comment>
<comment type="catalytic activity">
    <reaction evidence="1">
        <text>thiosulfate + [thioredoxin]-dithiol = [thioredoxin]-disulfide + hydrogen sulfide + sulfite + 2 H(+)</text>
        <dbReference type="Rhea" id="RHEA:83859"/>
        <dbReference type="Rhea" id="RHEA-COMP:10698"/>
        <dbReference type="Rhea" id="RHEA-COMP:10700"/>
        <dbReference type="ChEBI" id="CHEBI:15378"/>
        <dbReference type="ChEBI" id="CHEBI:17359"/>
        <dbReference type="ChEBI" id="CHEBI:29919"/>
        <dbReference type="ChEBI" id="CHEBI:29950"/>
        <dbReference type="ChEBI" id="CHEBI:33542"/>
        <dbReference type="ChEBI" id="CHEBI:50058"/>
    </reaction>
</comment>
<comment type="subcellular location">
    <subcellularLocation>
        <location evidence="1">Cytoplasm</location>
    </subcellularLocation>
</comment>
<comment type="similarity">
    <text evidence="1">Belongs to the GlpE family.</text>
</comment>
<reference key="1">
    <citation type="submission" date="2009-05" db="EMBL/GenBank/DDBJ databases">
        <title>Complete sequence of Tolumonas auensis DSM 9187.</title>
        <authorList>
            <consortium name="US DOE Joint Genome Institute"/>
            <person name="Lucas S."/>
            <person name="Copeland A."/>
            <person name="Lapidus A."/>
            <person name="Glavina del Rio T."/>
            <person name="Tice H."/>
            <person name="Bruce D."/>
            <person name="Goodwin L."/>
            <person name="Pitluck S."/>
            <person name="Chertkov O."/>
            <person name="Brettin T."/>
            <person name="Detter J.C."/>
            <person name="Han C."/>
            <person name="Larimer F."/>
            <person name="Land M."/>
            <person name="Hauser L."/>
            <person name="Kyrpides N."/>
            <person name="Mikhailova N."/>
            <person name="Spring S."/>
            <person name="Beller H."/>
        </authorList>
    </citation>
    <scope>NUCLEOTIDE SEQUENCE [LARGE SCALE GENOMIC DNA]</scope>
    <source>
        <strain>DSM 9187 / NBRC 110442 / TA 4</strain>
    </source>
</reference>
<proteinExistence type="inferred from homology"/>
<evidence type="ECO:0000255" key="1">
    <source>
        <dbReference type="HAMAP-Rule" id="MF_01009"/>
    </source>
</evidence>